<proteinExistence type="inferred from homology"/>
<accession>Q3BVZ0</accession>
<protein>
    <recommendedName>
        <fullName evidence="1">Small ribosomal subunit protein bS16</fullName>
    </recommendedName>
    <alternativeName>
        <fullName evidence="2">30S ribosomal protein S16</fullName>
    </alternativeName>
</protein>
<comment type="similarity">
    <text evidence="1">Belongs to the bacterial ribosomal protein bS16 family.</text>
</comment>
<evidence type="ECO:0000255" key="1">
    <source>
        <dbReference type="HAMAP-Rule" id="MF_00385"/>
    </source>
</evidence>
<evidence type="ECO:0000305" key="2"/>
<sequence length="85" mass="9546">MVKIRLTRGGAKKRPFYHIIVTDVRSARDGRNIERLGYYNPVAQGAEPRIVLDVARVDHWVGNGAQLTDKVRNLYREAKSQAAAA</sequence>
<dbReference type="EMBL" id="AM039952">
    <property type="protein sequence ID" value="CAJ22973.1"/>
    <property type="molecule type" value="Genomic_DNA"/>
</dbReference>
<dbReference type="RefSeq" id="WP_003484223.1">
    <property type="nucleotide sequence ID" value="NZ_CP017190.1"/>
</dbReference>
<dbReference type="SMR" id="Q3BVZ0"/>
<dbReference type="STRING" id="456327.BJD11_15975"/>
<dbReference type="GeneID" id="97509641"/>
<dbReference type="KEGG" id="xcv:XCV1342"/>
<dbReference type="eggNOG" id="COG0228">
    <property type="taxonomic scope" value="Bacteria"/>
</dbReference>
<dbReference type="HOGENOM" id="CLU_100590_5_1_6"/>
<dbReference type="Proteomes" id="UP000007069">
    <property type="component" value="Chromosome"/>
</dbReference>
<dbReference type="GO" id="GO:0005737">
    <property type="term" value="C:cytoplasm"/>
    <property type="evidence" value="ECO:0007669"/>
    <property type="project" value="UniProtKB-ARBA"/>
</dbReference>
<dbReference type="GO" id="GO:0015935">
    <property type="term" value="C:small ribosomal subunit"/>
    <property type="evidence" value="ECO:0007669"/>
    <property type="project" value="TreeGrafter"/>
</dbReference>
<dbReference type="GO" id="GO:0003735">
    <property type="term" value="F:structural constituent of ribosome"/>
    <property type="evidence" value="ECO:0007669"/>
    <property type="project" value="InterPro"/>
</dbReference>
<dbReference type="GO" id="GO:0006412">
    <property type="term" value="P:translation"/>
    <property type="evidence" value="ECO:0007669"/>
    <property type="project" value="UniProtKB-UniRule"/>
</dbReference>
<dbReference type="FunFam" id="3.30.1320.10:FF:000008">
    <property type="entry name" value="30S ribosomal protein S16"/>
    <property type="match status" value="1"/>
</dbReference>
<dbReference type="Gene3D" id="3.30.1320.10">
    <property type="match status" value="1"/>
</dbReference>
<dbReference type="HAMAP" id="MF_00385">
    <property type="entry name" value="Ribosomal_bS16"/>
    <property type="match status" value="1"/>
</dbReference>
<dbReference type="InterPro" id="IPR000307">
    <property type="entry name" value="Ribosomal_bS16"/>
</dbReference>
<dbReference type="InterPro" id="IPR020592">
    <property type="entry name" value="Ribosomal_bS16_CS"/>
</dbReference>
<dbReference type="InterPro" id="IPR023803">
    <property type="entry name" value="Ribosomal_bS16_dom_sf"/>
</dbReference>
<dbReference type="NCBIfam" id="TIGR00002">
    <property type="entry name" value="S16"/>
    <property type="match status" value="1"/>
</dbReference>
<dbReference type="PANTHER" id="PTHR12919">
    <property type="entry name" value="30S RIBOSOMAL PROTEIN S16"/>
    <property type="match status" value="1"/>
</dbReference>
<dbReference type="PANTHER" id="PTHR12919:SF20">
    <property type="entry name" value="SMALL RIBOSOMAL SUBUNIT PROTEIN BS16M"/>
    <property type="match status" value="1"/>
</dbReference>
<dbReference type="Pfam" id="PF00886">
    <property type="entry name" value="Ribosomal_S16"/>
    <property type="match status" value="1"/>
</dbReference>
<dbReference type="SUPFAM" id="SSF54565">
    <property type="entry name" value="Ribosomal protein S16"/>
    <property type="match status" value="1"/>
</dbReference>
<dbReference type="PROSITE" id="PS00732">
    <property type="entry name" value="RIBOSOMAL_S16"/>
    <property type="match status" value="1"/>
</dbReference>
<keyword id="KW-0687">Ribonucleoprotein</keyword>
<keyword id="KW-0689">Ribosomal protein</keyword>
<name>RS16_XANE5</name>
<organism>
    <name type="scientific">Xanthomonas euvesicatoria pv. vesicatoria (strain 85-10)</name>
    <name type="common">Xanthomonas campestris pv. vesicatoria</name>
    <dbReference type="NCBI Taxonomy" id="316273"/>
    <lineage>
        <taxon>Bacteria</taxon>
        <taxon>Pseudomonadati</taxon>
        <taxon>Pseudomonadota</taxon>
        <taxon>Gammaproteobacteria</taxon>
        <taxon>Lysobacterales</taxon>
        <taxon>Lysobacteraceae</taxon>
        <taxon>Xanthomonas</taxon>
    </lineage>
</organism>
<feature type="chain" id="PRO_0000243894" description="Small ribosomal subunit protein bS16">
    <location>
        <begin position="1"/>
        <end position="85"/>
    </location>
</feature>
<reference key="1">
    <citation type="journal article" date="2005" name="J. Bacteriol.">
        <title>Insights into genome plasticity and pathogenicity of the plant pathogenic Bacterium Xanthomonas campestris pv. vesicatoria revealed by the complete genome sequence.</title>
        <authorList>
            <person name="Thieme F."/>
            <person name="Koebnik R."/>
            <person name="Bekel T."/>
            <person name="Berger C."/>
            <person name="Boch J."/>
            <person name="Buettner D."/>
            <person name="Caldana C."/>
            <person name="Gaigalat L."/>
            <person name="Goesmann A."/>
            <person name="Kay S."/>
            <person name="Kirchner O."/>
            <person name="Lanz C."/>
            <person name="Linke B."/>
            <person name="McHardy A.C."/>
            <person name="Meyer F."/>
            <person name="Mittenhuber G."/>
            <person name="Nies D.H."/>
            <person name="Niesbach-Kloesgen U."/>
            <person name="Patschkowski T."/>
            <person name="Rueckert C."/>
            <person name="Rupp O."/>
            <person name="Schneiker S."/>
            <person name="Schuster S.C."/>
            <person name="Vorhoelter F.J."/>
            <person name="Weber E."/>
            <person name="Puehler A."/>
            <person name="Bonas U."/>
            <person name="Bartels D."/>
            <person name="Kaiser O."/>
        </authorList>
    </citation>
    <scope>NUCLEOTIDE SEQUENCE [LARGE SCALE GENOMIC DNA]</scope>
    <source>
        <strain>85-10</strain>
    </source>
</reference>
<gene>
    <name evidence="1" type="primary">rpsP</name>
    <name type="ordered locus">XCV1342</name>
</gene>